<dbReference type="EC" id="1.1.1.-" evidence="4 6"/>
<dbReference type="EMBL" id="AB570429">
    <property type="protein sequence ID" value="BAJ10702.1"/>
    <property type="molecule type" value="mRNA"/>
</dbReference>
<dbReference type="SMR" id="D7UTD0"/>
<dbReference type="BioCyc" id="MetaCyc:MONOMER-18712"/>
<dbReference type="GO" id="GO:0016491">
    <property type="term" value="F:oxidoreductase activity"/>
    <property type="evidence" value="ECO:0007669"/>
    <property type="project" value="UniProtKB-KW"/>
</dbReference>
<dbReference type="Gene3D" id="3.40.50.720">
    <property type="entry name" value="NAD(P)-binding Rossmann-like Domain"/>
    <property type="match status" value="1"/>
</dbReference>
<dbReference type="InterPro" id="IPR036291">
    <property type="entry name" value="NAD(P)-bd_dom_sf"/>
</dbReference>
<dbReference type="InterPro" id="IPR002347">
    <property type="entry name" value="SDR_fam"/>
</dbReference>
<dbReference type="PANTHER" id="PTHR24320">
    <property type="entry name" value="RETINOL DEHYDROGENASE"/>
    <property type="match status" value="1"/>
</dbReference>
<dbReference type="PANTHER" id="PTHR24320:SF236">
    <property type="entry name" value="SHORT-CHAIN DEHYDROGENASE-RELATED"/>
    <property type="match status" value="1"/>
</dbReference>
<dbReference type="Pfam" id="PF00106">
    <property type="entry name" value="adh_short"/>
    <property type="match status" value="1"/>
</dbReference>
<dbReference type="PRINTS" id="PR00081">
    <property type="entry name" value="GDHRDH"/>
</dbReference>
<dbReference type="SUPFAM" id="SSF51735">
    <property type="entry name" value="NAD(P)-binding Rossmann-fold domains"/>
    <property type="match status" value="1"/>
</dbReference>
<feature type="chain" id="PRO_0000445461" description="Short-chain dehydrogenase/reductase">
    <location>
        <begin position="1"/>
        <end position="334"/>
    </location>
</feature>
<feature type="active site" description="Proton donor" evidence="2">
    <location>
        <position position="176"/>
    </location>
</feature>
<feature type="active site" description="Proton donor" evidence="2">
    <location>
        <position position="205"/>
    </location>
</feature>
<feature type="active site" description="Lowers pKa of active site Tyr" evidence="2">
    <location>
        <position position="209"/>
    </location>
</feature>
<feature type="binding site" evidence="1">
    <location>
        <position position="44"/>
    </location>
    <ligand>
        <name>NADP(+)</name>
        <dbReference type="ChEBI" id="CHEBI:58349"/>
    </ligand>
</feature>
<feature type="binding site" evidence="1">
    <location>
        <position position="68"/>
    </location>
    <ligand>
        <name>NADP(+)</name>
        <dbReference type="ChEBI" id="CHEBI:58349"/>
    </ligand>
</feature>
<feature type="binding site" evidence="1">
    <location>
        <position position="93"/>
    </location>
    <ligand>
        <name>NADP(+)</name>
        <dbReference type="ChEBI" id="CHEBI:58349"/>
    </ligand>
</feature>
<feature type="binding site" evidence="2">
    <location>
        <position position="120"/>
    </location>
    <ligand>
        <name>NADP(+)</name>
        <dbReference type="ChEBI" id="CHEBI:58349"/>
    </ligand>
</feature>
<feature type="binding site" evidence="1">
    <location>
        <position position="152"/>
    </location>
    <ligand>
        <name>NADP(+)</name>
        <dbReference type="ChEBI" id="CHEBI:58349"/>
    </ligand>
</feature>
<feature type="binding site" evidence="2">
    <location>
        <position position="205"/>
    </location>
    <ligand>
        <name>NADP(+)</name>
        <dbReference type="ChEBI" id="CHEBI:58349"/>
    </ligand>
</feature>
<feature type="binding site" evidence="2">
    <location>
        <position position="209"/>
    </location>
    <ligand>
        <name>NADP(+)</name>
        <dbReference type="ChEBI" id="CHEBI:58349"/>
    </ligand>
</feature>
<feature type="binding site" evidence="2">
    <location>
        <position position="239"/>
    </location>
    <ligand>
        <name>NADP(+)</name>
        <dbReference type="ChEBI" id="CHEBI:58349"/>
    </ligand>
</feature>
<accession>D7UTD0</accession>
<keyword id="KW-0521">NADP</keyword>
<keyword id="KW-0560">Oxidoreductase</keyword>
<gene>
    <name evidence="7" type="primary">fc-sdr</name>
    <name evidence="8" type="synonym">orf4</name>
</gene>
<sequence length="334" mass="36689">MFGSFNSLKNAWAQVFPQAPDFTESSIPDLLGKVYIVTGANSGLGKELSGILYSKNAKVYVAARSEAKAQAAIEFIKAAHPHSKGDLVYLQIDLADLSAIKSSVNAFLSQEARLDVLFNNAGVLAPHDAPKTAQGYELNLGTNTIGTFLLTKLLLPTLLNTAKSSPKDSVRVIWVSSIAVNFSEQGGLDMENLDYHEDKSAVTKYAVSKVGNFLHSVELARRHGANADGVVSVALNPGNLDTELGRDRSWLETKILRTFVLYPPVFGAYTELFAGLSDQITAEMVRDNNWIGPWGRFCRIREDIDQAARPRSEGGHGLAERFWRWTEEQVKPYV</sequence>
<organism>
    <name type="scientific">Phomopsis amygdali</name>
    <name type="common">Fusicoccum amygdali</name>
    <dbReference type="NCBI Taxonomy" id="1214568"/>
    <lineage>
        <taxon>Eukaryota</taxon>
        <taxon>Fungi</taxon>
        <taxon>Dikarya</taxon>
        <taxon>Ascomycota</taxon>
        <taxon>Pezizomycotina</taxon>
        <taxon>Sordariomycetes</taxon>
        <taxon>Sordariomycetidae</taxon>
        <taxon>Diaporthales</taxon>
        <taxon>Diaporthaceae</taxon>
        <taxon>Diaporthe</taxon>
    </lineage>
</organism>
<name>FC4_PHOAM</name>
<evidence type="ECO:0000250" key="1">
    <source>
        <dbReference type="UniProtKB" id="L0E2Z4"/>
    </source>
</evidence>
<evidence type="ECO:0000250" key="2">
    <source>
        <dbReference type="UniProtKB" id="O93868"/>
    </source>
</evidence>
<evidence type="ECO:0000269" key="3">
    <source>
    </source>
</evidence>
<evidence type="ECO:0000269" key="4">
    <source>
    </source>
</evidence>
<evidence type="ECO:0000269" key="5">
    <source>
    </source>
</evidence>
<evidence type="ECO:0000269" key="6">
    <source>
    </source>
</evidence>
<evidence type="ECO:0000303" key="7">
    <source>
    </source>
</evidence>
<evidence type="ECO:0000303" key="8">
    <source>
    </source>
</evidence>
<evidence type="ECO:0000305" key="9"/>
<protein>
    <recommendedName>
        <fullName evidence="7">Short-chain dehydrogenase/reductase</fullName>
        <ecNumber evidence="4 6">1.1.1.-</ecNumber>
    </recommendedName>
    <alternativeName>
        <fullName evidence="8">Fusicoccin A biosynthetic gene clusters protein 4</fullName>
    </alternativeName>
</protein>
<comment type="function">
    <text evidence="3 4 5 6">Short-chain dehydrogenase/reductase; part of the 2 gene clusters that mediate the biosynthesis of fusicoccins, diterpene glucosides that display phytohormone-like activity and function as potent activators of plasma membrane H(+)-ATPases in plants by modifying 14-3-3 proteins and cause the plant disease constriction canker (PubMed:21299202, PubMed:22870285). The first step in the pathway is performed by the fusicoccadiene synthase PaFS that possesses both prenyl transferase and terpene cyclase activity, converting isopentenyl diphosphate and dimethylallyl diphosphate into geranylgeranyl diphosphate (GGDP) and successively converting GGDP into fusicocca-2,10(14)-diene, a precursor for fusicoccin H (PubMed:17360612). The second step is the oxidation at the C-8 position by the cytochrome P450 monooxygenase PaP450-2 to yield fusicocca-2,10(14)-diene-8-beta-ol (PubMed:22870285). The cytochrome P450 monooxygenase PaP450-1 then catalyzes the hydroxylation at the C-16 position to produce fusicocca-2,10(14)-diene-8-beta,16-diol (PubMed:22870285). The dioxygenase fc-dox then catalyzes the 16-oxydation of fusicocca-2,10(14)-diene-8-beta,16-diol to yield an aldehyde (8-beta-hydroxyfusicocca-1,10(14)-dien-16-al) (PubMed:21299202, PubMed:22870285). The short-chain dehydrogenase/reductase fc-sdr catalyzes the reduction of the aldehyde to yield fusicocca-1,10(14)-diene-8-beta,16-diol (PubMed:21299202, PubMed:22870285). The next step is the hydroxylation at C-9 performed by the cytochrome P450 monooxygenase PaP450-3 that leads to fusicoccin H aglycon which is glycosylated to fusicoccin H by the O-glycosyltransferase PaGT (PubMed:22870285). Hydroxylation at C-12 by the cytochrome P450 monooxygenase PaP450-4 leads then to the production of fusicoccin Q and is followed by methylation by the O-methyltransferase PaMT to yield fusicoccin P (PubMed:22870285). Fusicoccin P is further converted to fusicoccin J via prenylation by the O-glucose prenyltransferase PaPT (PubMed:22287087). Cytochrome P450 monooxygenase PaP450-5 then performs hydroxylation at C-19 to yield dideacetyl-fusicoccin A which is acetylated to 3'-O-deacetyl-fusicoccin A by the O-acetyltransferase PaAT-2 (PubMed:22870285). Finally, a another acetylation by the O-acetyltransferase PaAT-1 yields fusicoccin A (PubMed:22870285).</text>
</comment>
<comment type="pathway">
    <text evidence="4 6">Mycotoxin biosynthesis.</text>
</comment>
<comment type="similarity">
    <text evidence="9">Belongs to the short-chain dehydrogenases/reductases (SDR) family.</text>
</comment>
<proteinExistence type="evidence at protein level"/>
<reference key="1">
    <citation type="journal article" date="2011" name="J. Am. Chem. Soc.">
        <title>Dioxygenases, key enzymes to determine the aglycon structures of fusicoccin and brassicicene, diterpene compounds produced by fungi.</title>
        <authorList>
            <person name="Ono Y."/>
            <person name="Minami A."/>
            <person name="Noike M."/>
            <person name="Higuchi Y."/>
            <person name="Toyomasu T."/>
            <person name="Sassa T."/>
            <person name="Kato N."/>
            <person name="Dairi T."/>
        </authorList>
    </citation>
    <scope>NUCLEOTIDE SEQUENCE [MRNA]</scope>
    <scope>FUNCTION</scope>
    <scope>CATALYTIC ACTIVITY</scope>
    <scope>PATHWAY</scope>
</reference>
<reference key="2">
    <citation type="journal article" date="2007" name="Proc. Natl. Acad. Sci. U.S.A.">
        <title>Fusicoccins are biosynthesized by an unusual chimera diterpene synthase in fungi.</title>
        <authorList>
            <person name="Toyomasu T."/>
            <person name="Tsukahara M."/>
            <person name="Kaneko A."/>
            <person name="Niida R."/>
            <person name="Mitsuhashi W."/>
            <person name="Dairi T."/>
            <person name="Kato N."/>
            <person name="Sassa T."/>
        </authorList>
    </citation>
    <scope>FUNCTION</scope>
</reference>
<reference key="3">
    <citation type="journal article" date="2012" name="ChemBioChem">
        <title>An enzyme catalyzing O-prenylation of the glucose moiety of fusicoccin A, a diterpene glucoside produced by the fungus Phomopsis amygdali.</title>
        <authorList>
            <person name="Noike M."/>
            <person name="Liu C."/>
            <person name="Ono Y."/>
            <person name="Hamano Y."/>
            <person name="Toyomasu T."/>
            <person name="Sassa T."/>
            <person name="Kato N."/>
            <person name="Dairi T."/>
        </authorList>
    </citation>
    <scope>FUNCTION</scope>
</reference>
<reference key="4">
    <citation type="journal article" date="2012" name="PLoS ONE">
        <title>Molecular breeding of a fungus producing a precursor diterpene suitable for semi-synthesis by dissection of the biosynthetic machinery.</title>
        <authorList>
            <person name="Noike M."/>
            <person name="Ono Y."/>
            <person name="Araki Y."/>
            <person name="Tanio R."/>
            <person name="Higuchi Y."/>
            <person name="Nitta H."/>
            <person name="Hamano Y."/>
            <person name="Toyomasu T."/>
            <person name="Sassa T."/>
            <person name="Kato N."/>
            <person name="Dairi T."/>
        </authorList>
    </citation>
    <scope>FUNCTION</scope>
    <scope>CATALYTIC ACTIVITY</scope>
    <scope>PATHWAY</scope>
</reference>